<dbReference type="EMBL" id="CP000323">
    <property type="protein sequence ID" value="ABE76233.1"/>
    <property type="molecule type" value="Genomic_DNA"/>
</dbReference>
<dbReference type="RefSeq" id="WP_011514754.1">
    <property type="nucleotide sequence ID" value="NC_007969.1"/>
</dbReference>
<dbReference type="SMR" id="Q1Q7X0"/>
<dbReference type="STRING" id="335284.Pcryo_2456"/>
<dbReference type="KEGG" id="pcr:Pcryo_2456"/>
<dbReference type="eggNOG" id="COG0443">
    <property type="taxonomic scope" value="Bacteria"/>
</dbReference>
<dbReference type="HOGENOM" id="CLU_005965_2_1_6"/>
<dbReference type="Proteomes" id="UP000002425">
    <property type="component" value="Chromosome"/>
</dbReference>
<dbReference type="GO" id="GO:0005524">
    <property type="term" value="F:ATP binding"/>
    <property type="evidence" value="ECO:0007669"/>
    <property type="project" value="UniProtKB-UniRule"/>
</dbReference>
<dbReference type="GO" id="GO:0140662">
    <property type="term" value="F:ATP-dependent protein folding chaperone"/>
    <property type="evidence" value="ECO:0007669"/>
    <property type="project" value="InterPro"/>
</dbReference>
<dbReference type="GO" id="GO:0051082">
    <property type="term" value="F:unfolded protein binding"/>
    <property type="evidence" value="ECO:0007669"/>
    <property type="project" value="InterPro"/>
</dbReference>
<dbReference type="CDD" id="cd10234">
    <property type="entry name" value="ASKHA_NBD_HSP70_DnaK-like"/>
    <property type="match status" value="1"/>
</dbReference>
<dbReference type="FunFam" id="2.60.34.10:FF:000014">
    <property type="entry name" value="Chaperone protein DnaK HSP70"/>
    <property type="match status" value="1"/>
</dbReference>
<dbReference type="FunFam" id="1.20.1270.10:FF:000001">
    <property type="entry name" value="Molecular chaperone DnaK"/>
    <property type="match status" value="1"/>
</dbReference>
<dbReference type="FunFam" id="3.30.420.40:FF:000004">
    <property type="entry name" value="Molecular chaperone DnaK"/>
    <property type="match status" value="1"/>
</dbReference>
<dbReference type="FunFam" id="3.90.640.10:FF:000003">
    <property type="entry name" value="Molecular chaperone DnaK"/>
    <property type="match status" value="1"/>
</dbReference>
<dbReference type="Gene3D" id="1.20.1270.10">
    <property type="match status" value="1"/>
</dbReference>
<dbReference type="Gene3D" id="3.30.420.40">
    <property type="match status" value="2"/>
</dbReference>
<dbReference type="Gene3D" id="3.90.640.10">
    <property type="entry name" value="Actin, Chain A, domain 4"/>
    <property type="match status" value="1"/>
</dbReference>
<dbReference type="Gene3D" id="2.60.34.10">
    <property type="entry name" value="Substrate Binding Domain Of DNAk, Chain A, domain 1"/>
    <property type="match status" value="1"/>
</dbReference>
<dbReference type="HAMAP" id="MF_00332">
    <property type="entry name" value="DnaK"/>
    <property type="match status" value="1"/>
</dbReference>
<dbReference type="InterPro" id="IPR043129">
    <property type="entry name" value="ATPase_NBD"/>
</dbReference>
<dbReference type="InterPro" id="IPR012725">
    <property type="entry name" value="Chaperone_DnaK"/>
</dbReference>
<dbReference type="InterPro" id="IPR018181">
    <property type="entry name" value="Heat_shock_70_CS"/>
</dbReference>
<dbReference type="InterPro" id="IPR029048">
    <property type="entry name" value="HSP70_C_sf"/>
</dbReference>
<dbReference type="InterPro" id="IPR029047">
    <property type="entry name" value="HSP70_peptide-bd_sf"/>
</dbReference>
<dbReference type="InterPro" id="IPR013126">
    <property type="entry name" value="Hsp_70_fam"/>
</dbReference>
<dbReference type="NCBIfam" id="NF001413">
    <property type="entry name" value="PRK00290.1"/>
    <property type="match status" value="1"/>
</dbReference>
<dbReference type="NCBIfam" id="TIGR02350">
    <property type="entry name" value="prok_dnaK"/>
    <property type="match status" value="1"/>
</dbReference>
<dbReference type="PANTHER" id="PTHR19375">
    <property type="entry name" value="HEAT SHOCK PROTEIN 70KDA"/>
    <property type="match status" value="1"/>
</dbReference>
<dbReference type="Pfam" id="PF00012">
    <property type="entry name" value="HSP70"/>
    <property type="match status" value="1"/>
</dbReference>
<dbReference type="PRINTS" id="PR00301">
    <property type="entry name" value="HEATSHOCK70"/>
</dbReference>
<dbReference type="SUPFAM" id="SSF53067">
    <property type="entry name" value="Actin-like ATPase domain"/>
    <property type="match status" value="2"/>
</dbReference>
<dbReference type="SUPFAM" id="SSF100934">
    <property type="entry name" value="Heat shock protein 70kD (HSP70), C-terminal subdomain"/>
    <property type="match status" value="1"/>
</dbReference>
<dbReference type="SUPFAM" id="SSF100920">
    <property type="entry name" value="Heat shock protein 70kD (HSP70), peptide-binding domain"/>
    <property type="match status" value="1"/>
</dbReference>
<dbReference type="PROSITE" id="PS00297">
    <property type="entry name" value="HSP70_1"/>
    <property type="match status" value="1"/>
</dbReference>
<dbReference type="PROSITE" id="PS00329">
    <property type="entry name" value="HSP70_2"/>
    <property type="match status" value="1"/>
</dbReference>
<dbReference type="PROSITE" id="PS01036">
    <property type="entry name" value="HSP70_3"/>
    <property type="match status" value="1"/>
</dbReference>
<evidence type="ECO:0000255" key="1">
    <source>
        <dbReference type="HAMAP-Rule" id="MF_00332"/>
    </source>
</evidence>
<evidence type="ECO:0000256" key="2">
    <source>
        <dbReference type="SAM" id="MobiDB-lite"/>
    </source>
</evidence>
<keyword id="KW-0067">ATP-binding</keyword>
<keyword id="KW-0143">Chaperone</keyword>
<keyword id="KW-0547">Nucleotide-binding</keyword>
<keyword id="KW-0597">Phosphoprotein</keyword>
<keyword id="KW-0346">Stress response</keyword>
<feature type="chain" id="PRO_1000059637" description="Chaperone protein DnaK">
    <location>
        <begin position="1"/>
        <end position="647"/>
    </location>
</feature>
<feature type="region of interest" description="Disordered" evidence="2">
    <location>
        <begin position="606"/>
        <end position="634"/>
    </location>
</feature>
<feature type="compositionally biased region" description="Polar residues" evidence="2">
    <location>
        <begin position="615"/>
        <end position="628"/>
    </location>
</feature>
<feature type="modified residue" description="Phosphothreonine; by autocatalysis" evidence="1">
    <location>
        <position position="198"/>
    </location>
</feature>
<gene>
    <name evidence="1" type="primary">dnaK</name>
    <name type="ordered locus">Pcryo_2456</name>
</gene>
<comment type="function">
    <text evidence="1">Acts as a chaperone.</text>
</comment>
<comment type="induction">
    <text evidence="1">By stress conditions e.g. heat shock.</text>
</comment>
<comment type="similarity">
    <text evidence="1">Belongs to the heat shock protein 70 family.</text>
</comment>
<accession>Q1Q7X0</accession>
<name>DNAK_PSYCK</name>
<organism>
    <name type="scientific">Psychrobacter cryohalolentis (strain ATCC BAA-1226 / DSM 17306 / VKM B-2378 / K5)</name>
    <dbReference type="NCBI Taxonomy" id="335284"/>
    <lineage>
        <taxon>Bacteria</taxon>
        <taxon>Pseudomonadati</taxon>
        <taxon>Pseudomonadota</taxon>
        <taxon>Gammaproteobacteria</taxon>
        <taxon>Moraxellales</taxon>
        <taxon>Moraxellaceae</taxon>
        <taxon>Psychrobacter</taxon>
    </lineage>
</organism>
<sequence>MGKVIGIDLGTTNSCVAVMEGDKVKIIENAEGTRTTPSIVAYKDDEILVGQSAKRQAVTNPNNTLFAIKRLIGRRFDDKVVQKDIGMVPYKIAKADNGDAWVEINGKKLAPPQVSAEILKKMKKTAEDYLGEAVTEAVVTVPAYFNDSQRQATKDAGKIAGLDVKRIINEPTAAALAYGMDKKQGDSTVAVYDLGGGTFDVSIIEIADVDGEQQFEVLATNGDTFLGGEDFDSALIDFLVAEFKKDQDVNLKGDSLAMQRLKEAAEKAKIELSSAQSTEVNLPYITADSSGPKHLVVTISRSKLESLTEELVQRTMGPCKIALEDAGIKIGDIDDVILVGGQTRMPLVQQKVQEFFGQEPRKDVNPDEAVAAGAAIQGAVLSGEKTDVLLLDVTPLTLGIETMGGILTPIIEKNTMIPTKKSQVFSTAEDNQPAVSIQVYQGERKIANQNKQLGRFDLTDIPPAPRGLPQIEVSFDINADGIMNISATDKGTGKAQSIQIKADSGLSDEEVEQMIRDAEANAAEDEKFANLAQVRNEADGRIHAVQKALKDAADKVSDDEKSSVEAAISELEAAAKEDDHEEIKAKLEALDNAFLPVSQKIYADAGASAEGMDPNQFQQGADNAGESNQADDDVVDAEFTEVEDDKK</sequence>
<reference key="1">
    <citation type="submission" date="2006-03" db="EMBL/GenBank/DDBJ databases">
        <title>Complete sequence of chromosome of Psychrobacter cryohalolentis K5.</title>
        <authorList>
            <consortium name="US DOE Joint Genome Institute"/>
            <person name="Copeland A."/>
            <person name="Lucas S."/>
            <person name="Lapidus A."/>
            <person name="Barry K."/>
            <person name="Detter J.C."/>
            <person name="Glavina T."/>
            <person name="Hammon N."/>
            <person name="Israni S."/>
            <person name="Dalin E."/>
            <person name="Tice H."/>
            <person name="Pitluck S."/>
            <person name="Brettin T."/>
            <person name="Bruce D."/>
            <person name="Han C."/>
            <person name="Tapia R."/>
            <person name="Sims D.R."/>
            <person name="Gilna P."/>
            <person name="Schmutz J."/>
            <person name="Larimer F."/>
            <person name="Land M."/>
            <person name="Hauser L."/>
            <person name="Kyrpides N."/>
            <person name="Kim E."/>
            <person name="Richardson P."/>
        </authorList>
    </citation>
    <scope>NUCLEOTIDE SEQUENCE [LARGE SCALE GENOMIC DNA]</scope>
    <source>
        <strain>ATCC BAA-1226 / DSM 17306 / VKM B-2378 / K5</strain>
    </source>
</reference>
<protein>
    <recommendedName>
        <fullName evidence="1">Chaperone protein DnaK</fullName>
    </recommendedName>
    <alternativeName>
        <fullName evidence="1">HSP70</fullName>
    </alternativeName>
    <alternativeName>
        <fullName evidence="1">Heat shock 70 kDa protein</fullName>
    </alternativeName>
    <alternativeName>
        <fullName evidence="1">Heat shock protein 70</fullName>
    </alternativeName>
</protein>
<proteinExistence type="inferred from homology"/>